<evidence type="ECO:0000250" key="1"/>
<evidence type="ECO:0000255" key="2">
    <source>
        <dbReference type="HAMAP-Rule" id="MF_01057"/>
    </source>
</evidence>
<feature type="chain" id="PRO_0000229191" description="tRNA (guanine-N(7)-)-methyltransferase">
    <location>
        <begin position="1"/>
        <end position="241"/>
    </location>
</feature>
<feature type="active site" evidence="1">
    <location>
        <position position="150"/>
    </location>
</feature>
<feature type="binding site" evidence="2">
    <location>
        <position position="76"/>
    </location>
    <ligand>
        <name>S-adenosyl-L-methionine</name>
        <dbReference type="ChEBI" id="CHEBI:59789"/>
    </ligand>
</feature>
<feature type="binding site" evidence="2">
    <location>
        <position position="101"/>
    </location>
    <ligand>
        <name>S-adenosyl-L-methionine</name>
        <dbReference type="ChEBI" id="CHEBI:59789"/>
    </ligand>
</feature>
<feature type="binding site" evidence="2">
    <location>
        <position position="128"/>
    </location>
    <ligand>
        <name>S-adenosyl-L-methionine</name>
        <dbReference type="ChEBI" id="CHEBI:59789"/>
    </ligand>
</feature>
<feature type="binding site" evidence="2">
    <location>
        <position position="150"/>
    </location>
    <ligand>
        <name>S-adenosyl-L-methionine</name>
        <dbReference type="ChEBI" id="CHEBI:59789"/>
    </ligand>
</feature>
<feature type="binding site" evidence="2">
    <location>
        <position position="154"/>
    </location>
    <ligand>
        <name>substrate</name>
    </ligand>
</feature>
<feature type="binding site" evidence="2">
    <location>
        <position position="186"/>
    </location>
    <ligand>
        <name>substrate</name>
    </ligand>
</feature>
<feature type="binding site" evidence="2">
    <location>
        <begin position="219"/>
        <end position="222"/>
    </location>
    <ligand>
        <name>substrate</name>
    </ligand>
</feature>
<accession>Q3IW88</accession>
<name>TRMB_CERS4</name>
<keyword id="KW-0489">Methyltransferase</keyword>
<keyword id="KW-1185">Reference proteome</keyword>
<keyword id="KW-0949">S-adenosyl-L-methionine</keyword>
<keyword id="KW-0808">Transferase</keyword>
<keyword id="KW-0819">tRNA processing</keyword>
<organism>
    <name type="scientific">Cereibacter sphaeroides (strain ATCC 17023 / DSM 158 / JCM 6121 / CCUG 31486 / LMG 2827 / NBRC 12203 / NCIMB 8253 / ATH 2.4.1.)</name>
    <name type="common">Rhodobacter sphaeroides</name>
    <dbReference type="NCBI Taxonomy" id="272943"/>
    <lineage>
        <taxon>Bacteria</taxon>
        <taxon>Pseudomonadati</taxon>
        <taxon>Pseudomonadota</taxon>
        <taxon>Alphaproteobacteria</taxon>
        <taxon>Rhodobacterales</taxon>
        <taxon>Paracoccaceae</taxon>
        <taxon>Cereibacter</taxon>
    </lineage>
</organism>
<reference key="1">
    <citation type="submission" date="2005-09" db="EMBL/GenBank/DDBJ databases">
        <title>Complete sequence of chromosome 2 of Rhodobacter sphaeroides 2.4.1.</title>
        <authorList>
            <person name="Copeland A."/>
            <person name="Lucas S."/>
            <person name="Lapidus A."/>
            <person name="Barry K."/>
            <person name="Detter J.C."/>
            <person name="Glavina T."/>
            <person name="Hammon N."/>
            <person name="Israni S."/>
            <person name="Pitluck S."/>
            <person name="Richardson P."/>
            <person name="Mackenzie C."/>
            <person name="Choudhary M."/>
            <person name="Larimer F."/>
            <person name="Hauser L.J."/>
            <person name="Land M."/>
            <person name="Donohue T.J."/>
            <person name="Kaplan S."/>
        </authorList>
    </citation>
    <scope>NUCLEOTIDE SEQUENCE [LARGE SCALE GENOMIC DNA]</scope>
    <source>
        <strain>ATCC 17023 / DSM 158 / JCM 6121 / CCUG 31486 / LMG 2827 / NBRC 12203 / NCIMB 8253 / ATH 2.4.1.</strain>
    </source>
</reference>
<comment type="function">
    <text evidence="2">Catalyzes the formation of N(7)-methylguanine at position 46 (m7G46) in tRNA.</text>
</comment>
<comment type="catalytic activity">
    <reaction evidence="2">
        <text>guanosine(46) in tRNA + S-adenosyl-L-methionine = N(7)-methylguanosine(46) in tRNA + S-adenosyl-L-homocysteine</text>
        <dbReference type="Rhea" id="RHEA:42708"/>
        <dbReference type="Rhea" id="RHEA-COMP:10188"/>
        <dbReference type="Rhea" id="RHEA-COMP:10189"/>
        <dbReference type="ChEBI" id="CHEBI:57856"/>
        <dbReference type="ChEBI" id="CHEBI:59789"/>
        <dbReference type="ChEBI" id="CHEBI:74269"/>
        <dbReference type="ChEBI" id="CHEBI:74480"/>
        <dbReference type="EC" id="2.1.1.33"/>
    </reaction>
</comment>
<comment type="pathway">
    <text evidence="2">tRNA modification; N(7)-methylguanine-tRNA biosynthesis.</text>
</comment>
<comment type="similarity">
    <text evidence="2">Belongs to the class I-like SAM-binding methyltransferase superfamily. TrmB family.</text>
</comment>
<sequence>MSDDDAPESLRGAADGPAWRNFYGRRSGKTLRPSQKVYLSEDLGRLRPEGITREENPERRPLDLGALFGGRPVWLEIGFGGGEHMVHMAARNPGIGLIGCEPFVNGVAMLLGKIRAAGVENLLVHPGDVRDLFDVLPEASVSKAFLNYPDPWPKKRHHRRRFVTQGYLGPLARVLAPGATFRVATDIPDYVRQTLEEVPQAGFDLVSESGEAWEDWLSTRYEQKALREGRVPHYMTFRRQG</sequence>
<gene>
    <name evidence="2" type="primary">trmB</name>
    <name type="ordered locus">RHOS4_36280</name>
    <name type="ORF">RSP_3593</name>
</gene>
<dbReference type="EC" id="2.1.1.33" evidence="2"/>
<dbReference type="EMBL" id="CP000144">
    <property type="protein sequence ID" value="ABA81196.1"/>
    <property type="molecule type" value="Genomic_DNA"/>
</dbReference>
<dbReference type="RefSeq" id="WP_011339440.1">
    <property type="nucleotide sequence ID" value="NC_007494.2"/>
</dbReference>
<dbReference type="RefSeq" id="YP_355097.1">
    <property type="nucleotide sequence ID" value="NC_007494.2"/>
</dbReference>
<dbReference type="SMR" id="Q3IW88"/>
<dbReference type="STRING" id="272943.RSP_3593"/>
<dbReference type="EnsemblBacteria" id="ABA81196">
    <property type="protein sequence ID" value="ABA81196"/>
    <property type="gene ID" value="RSP_3593"/>
</dbReference>
<dbReference type="GeneID" id="3722110"/>
<dbReference type="KEGG" id="rsp:RSP_3593"/>
<dbReference type="PATRIC" id="fig|272943.9.peg.4029"/>
<dbReference type="eggNOG" id="COG0220">
    <property type="taxonomic scope" value="Bacteria"/>
</dbReference>
<dbReference type="OrthoDB" id="9802090at2"/>
<dbReference type="PhylomeDB" id="Q3IW88"/>
<dbReference type="UniPathway" id="UPA00989"/>
<dbReference type="Proteomes" id="UP000002703">
    <property type="component" value="Chromosome 2"/>
</dbReference>
<dbReference type="GO" id="GO:0043527">
    <property type="term" value="C:tRNA methyltransferase complex"/>
    <property type="evidence" value="ECO:0007669"/>
    <property type="project" value="TreeGrafter"/>
</dbReference>
<dbReference type="GO" id="GO:0008176">
    <property type="term" value="F:tRNA (guanine(46)-N7)-methyltransferase activity"/>
    <property type="evidence" value="ECO:0007669"/>
    <property type="project" value="UniProtKB-UniRule"/>
</dbReference>
<dbReference type="Gene3D" id="3.40.50.150">
    <property type="entry name" value="Vaccinia Virus protein VP39"/>
    <property type="match status" value="1"/>
</dbReference>
<dbReference type="HAMAP" id="MF_01057">
    <property type="entry name" value="tRNA_methyltr_TrmB"/>
    <property type="match status" value="1"/>
</dbReference>
<dbReference type="InterPro" id="IPR029063">
    <property type="entry name" value="SAM-dependent_MTases_sf"/>
</dbReference>
<dbReference type="InterPro" id="IPR003358">
    <property type="entry name" value="tRNA_(Gua-N-7)_MeTrfase_Trmb"/>
</dbReference>
<dbReference type="InterPro" id="IPR055361">
    <property type="entry name" value="tRNA_methyltr_TrmB_bact"/>
</dbReference>
<dbReference type="PANTHER" id="PTHR23417">
    <property type="entry name" value="3-DEOXY-D-MANNO-OCTULOSONIC-ACID TRANSFERASE/TRNA GUANINE-N 7 - -METHYLTRANSFERASE"/>
    <property type="match status" value="1"/>
</dbReference>
<dbReference type="PANTHER" id="PTHR23417:SF14">
    <property type="entry name" value="PENTACOTRIPEPTIDE-REPEAT REGION OF PRORP DOMAIN-CONTAINING PROTEIN"/>
    <property type="match status" value="1"/>
</dbReference>
<dbReference type="Pfam" id="PF02390">
    <property type="entry name" value="Methyltransf_4"/>
    <property type="match status" value="1"/>
</dbReference>
<dbReference type="SUPFAM" id="SSF53335">
    <property type="entry name" value="S-adenosyl-L-methionine-dependent methyltransferases"/>
    <property type="match status" value="1"/>
</dbReference>
<dbReference type="PROSITE" id="PS51625">
    <property type="entry name" value="SAM_MT_TRMB"/>
    <property type="match status" value="1"/>
</dbReference>
<proteinExistence type="inferred from homology"/>
<protein>
    <recommendedName>
        <fullName evidence="2">tRNA (guanine-N(7)-)-methyltransferase</fullName>
        <ecNumber evidence="2">2.1.1.33</ecNumber>
    </recommendedName>
    <alternativeName>
        <fullName evidence="2">tRNA (guanine(46)-N(7))-methyltransferase</fullName>
    </alternativeName>
    <alternativeName>
        <fullName evidence="2">tRNA(m7G46)-methyltransferase</fullName>
    </alternativeName>
</protein>